<sequence length="219" mass="21897">MSETAPAAPAAPAPAEKTPVKKKARKSAGAAKRKASGPPVSELITKAVAASKERSGVSLAALKKALAAAGYDVEKNNSRIKLGLKSLVSKGTLVQTKGTGASGSFKLNKKAAAGEAKPKPKKAGAAKPKKPAGAAKKPKKATGAATPKKGAKKTPKKAKKPAAAAGAKKAKSPKKAKAAKPKKAPKSPAKAKAVKPKAAKPKAAKPKTAKPKKAPAKKK</sequence>
<dbReference type="EMBL" id="AAGW02052081">
    <property type="status" value="NOT_ANNOTATED_CDS"/>
    <property type="molecule type" value="Genomic_DNA"/>
</dbReference>
<dbReference type="PIR" id="A02579">
    <property type="entry name" value="A02579"/>
</dbReference>
<dbReference type="SMR" id="P02252"/>
<dbReference type="FunCoup" id="P02252">
    <property type="interactions" value="66"/>
</dbReference>
<dbReference type="STRING" id="9986.ENSOCUP00000012414"/>
<dbReference type="iPTMnet" id="P02252"/>
<dbReference type="PaxDb" id="9986-ENSOCUP00000012414"/>
<dbReference type="eggNOG" id="KOG4012">
    <property type="taxonomic scope" value="Eukaryota"/>
</dbReference>
<dbReference type="HOGENOM" id="CLU_052897_7_0_1"/>
<dbReference type="InParanoid" id="P02252"/>
<dbReference type="OMA" id="MISECIA"/>
<dbReference type="TreeFam" id="TF313664"/>
<dbReference type="Proteomes" id="UP000001811">
    <property type="component" value="Unplaced"/>
</dbReference>
<dbReference type="GO" id="GO:0000786">
    <property type="term" value="C:nucleosome"/>
    <property type="evidence" value="ECO:0007669"/>
    <property type="project" value="InterPro"/>
</dbReference>
<dbReference type="GO" id="GO:0005634">
    <property type="term" value="C:nucleus"/>
    <property type="evidence" value="ECO:0007669"/>
    <property type="project" value="UniProtKB-SubCell"/>
</dbReference>
<dbReference type="GO" id="GO:0003677">
    <property type="term" value="F:DNA binding"/>
    <property type="evidence" value="ECO:0007669"/>
    <property type="project" value="UniProtKB-KW"/>
</dbReference>
<dbReference type="GO" id="GO:0030527">
    <property type="term" value="F:structural constituent of chromatin"/>
    <property type="evidence" value="ECO:0007669"/>
    <property type="project" value="InterPro"/>
</dbReference>
<dbReference type="GO" id="GO:0006334">
    <property type="term" value="P:nucleosome assembly"/>
    <property type="evidence" value="ECO:0007669"/>
    <property type="project" value="InterPro"/>
</dbReference>
<dbReference type="CDD" id="cd00073">
    <property type="entry name" value="H15"/>
    <property type="match status" value="1"/>
</dbReference>
<dbReference type="FunFam" id="1.10.10.10:FF:000075">
    <property type="entry name" value="Histone H1 like"/>
    <property type="match status" value="1"/>
</dbReference>
<dbReference type="Gene3D" id="1.10.10.10">
    <property type="entry name" value="Winged helix-like DNA-binding domain superfamily/Winged helix DNA-binding domain"/>
    <property type="match status" value="1"/>
</dbReference>
<dbReference type="InterPro" id="IPR005819">
    <property type="entry name" value="H1/H5"/>
</dbReference>
<dbReference type="InterPro" id="IPR005818">
    <property type="entry name" value="Histone_H1/H5_H15"/>
</dbReference>
<dbReference type="InterPro" id="IPR036388">
    <property type="entry name" value="WH-like_DNA-bd_sf"/>
</dbReference>
<dbReference type="InterPro" id="IPR036390">
    <property type="entry name" value="WH_DNA-bd_sf"/>
</dbReference>
<dbReference type="Pfam" id="PF00538">
    <property type="entry name" value="Linker_histone"/>
    <property type="match status" value="1"/>
</dbReference>
<dbReference type="PRINTS" id="PR00624">
    <property type="entry name" value="HISTONEH5"/>
</dbReference>
<dbReference type="SMART" id="SM00526">
    <property type="entry name" value="H15"/>
    <property type="match status" value="1"/>
</dbReference>
<dbReference type="SUPFAM" id="SSF46785">
    <property type="entry name" value="Winged helix' DNA-binding domain"/>
    <property type="match status" value="1"/>
</dbReference>
<dbReference type="PROSITE" id="PS51504">
    <property type="entry name" value="H15"/>
    <property type="match status" value="1"/>
</dbReference>
<feature type="initiator methionine" description="Removed" evidence="9">
    <location>
        <position position="1"/>
    </location>
</feature>
<feature type="chain" id="PRO_0000195922" description="Histone H1.4">
    <location>
        <begin position="2"/>
        <end position="219"/>
    </location>
</feature>
<feature type="domain" description="H15" evidence="7">
    <location>
        <begin position="36"/>
        <end position="109"/>
    </location>
</feature>
<feature type="region of interest" description="Disordered" evidence="8">
    <location>
        <begin position="1"/>
        <end position="41"/>
    </location>
</feature>
<feature type="region of interest" description="Disordered" evidence="8">
    <location>
        <begin position="91"/>
        <end position="219"/>
    </location>
</feature>
<feature type="compositionally biased region" description="Low complexity" evidence="8">
    <location>
        <begin position="1"/>
        <end position="15"/>
    </location>
</feature>
<feature type="compositionally biased region" description="Basic residues" evidence="8">
    <location>
        <begin position="20"/>
        <end position="35"/>
    </location>
</feature>
<feature type="compositionally biased region" description="Basic residues" evidence="8">
    <location>
        <begin position="119"/>
        <end position="140"/>
    </location>
</feature>
<feature type="compositionally biased region" description="Basic residues" evidence="8">
    <location>
        <begin position="149"/>
        <end position="160"/>
    </location>
</feature>
<feature type="compositionally biased region" description="Basic residues" evidence="8">
    <location>
        <begin position="168"/>
        <end position="185"/>
    </location>
</feature>
<feature type="compositionally biased region" description="Basic residues" evidence="8">
    <location>
        <begin position="192"/>
        <end position="219"/>
    </location>
</feature>
<feature type="modified residue" description="N-acetylserine" evidence="9">
    <location>
        <position position="2"/>
    </location>
</feature>
<feature type="modified residue" description="Phosphoserine" evidence="3">
    <location>
        <position position="2"/>
    </location>
</feature>
<feature type="modified residue" description="N6-acetyllysine" evidence="4">
    <location>
        <position position="17"/>
    </location>
</feature>
<feature type="modified residue" description="Phosphothreonine" evidence="2">
    <location>
        <position position="18"/>
    </location>
</feature>
<feature type="modified residue" description="N6-acetyllysine; alternate" evidence="2">
    <location>
        <position position="26"/>
    </location>
</feature>
<feature type="modified residue" description="N6-methyllysine; alternate" evidence="2">
    <location>
        <position position="26"/>
    </location>
</feature>
<feature type="modified residue" description="N6-(beta-hydroxybutyryl)lysine; alternate" evidence="6">
    <location>
        <position position="34"/>
    </location>
</feature>
<feature type="modified residue" description="N6-succinyllysine; alternate" evidence="4">
    <location>
        <position position="34"/>
    </location>
</feature>
<feature type="modified residue" description="Phosphoserine" evidence="9">
    <location>
        <position position="36"/>
    </location>
</feature>
<feature type="modified residue" description="N6-(beta-hydroxybutyryl)lysine" evidence="6">
    <location>
        <position position="52"/>
    </location>
</feature>
<feature type="modified residue" description="Citrulline" evidence="4">
    <location>
        <position position="54"/>
    </location>
</feature>
<feature type="modified residue" description="N6-(beta-hydroxybutyryl)lysine" evidence="6">
    <location>
        <position position="64"/>
    </location>
</feature>
<feature type="modified residue" description="N6-(beta-hydroxybutyryl)lysine" evidence="6">
    <location>
        <position position="85"/>
    </location>
</feature>
<feature type="modified residue" description="N6-(beta-hydroxybutyryl)lysine" evidence="6">
    <location>
        <position position="90"/>
    </location>
</feature>
<feature type="modified residue" description="N6-(beta-hydroxybutyryl)lysine" evidence="6">
    <location>
        <position position="106"/>
    </location>
</feature>
<feature type="modified residue" description="Phosphothreonine" evidence="2">
    <location>
        <position position="146"/>
    </location>
</feature>
<feature type="modified residue" description="Phosphoserine" evidence="2">
    <location>
        <position position="187"/>
    </location>
</feature>
<feature type="sequence conflict" description="In Ref. 2; AA sequence." evidence="10" ref="2">
    <location>
        <position position="4"/>
    </location>
</feature>
<feature type="sequence conflict" description="In Ref. 2; AA sequence." evidence="10" ref="2">
    <original>AP</original>
    <variation>ET</variation>
    <location>
        <begin position="8"/>
        <end position="9"/>
    </location>
</feature>
<feature type="sequence conflict" description="In Ref. 2; AA sequence." evidence="10" ref="2">
    <original>EK</original>
    <variation>KSPA</variation>
    <location>
        <begin position="16"/>
        <end position="17"/>
    </location>
</feature>
<feature type="sequence conflict" description="In Ref. 2; AA sequence." evidence="10" ref="2">
    <original>KAR</original>
    <variation>ARKK</variation>
    <location>
        <begin position="23"/>
        <end position="25"/>
    </location>
</feature>
<evidence type="ECO:0000250" key="1"/>
<evidence type="ECO:0000250" key="2">
    <source>
        <dbReference type="UniProtKB" id="P10412"/>
    </source>
</evidence>
<evidence type="ECO:0000250" key="3">
    <source>
        <dbReference type="UniProtKB" id="P15865"/>
    </source>
</evidence>
<evidence type="ECO:0000250" key="4">
    <source>
        <dbReference type="UniProtKB" id="P43274"/>
    </source>
</evidence>
<evidence type="ECO:0000250" key="5">
    <source>
        <dbReference type="UniProtKB" id="P43275"/>
    </source>
</evidence>
<evidence type="ECO:0000250" key="6">
    <source>
        <dbReference type="UniProtKB" id="P43277"/>
    </source>
</evidence>
<evidence type="ECO:0000255" key="7">
    <source>
        <dbReference type="PROSITE-ProRule" id="PRU00837"/>
    </source>
</evidence>
<evidence type="ECO:0000256" key="8">
    <source>
        <dbReference type="SAM" id="MobiDB-lite"/>
    </source>
</evidence>
<evidence type="ECO:0000269" key="9">
    <source>
    </source>
</evidence>
<evidence type="ECO:0000305" key="10"/>
<proteinExistence type="evidence at protein level"/>
<accession>P02252</accession>
<accession>G1T7E4</accession>
<reference key="1">
    <citation type="submission" date="2009-08" db="EMBL/GenBank/DDBJ databases">
        <title>Genome Sequence of Oryctolagus cuniculus (European rabbit).</title>
        <authorList>
            <consortium name="The Genome Sequencing Platform"/>
            <person name="Di Palma F."/>
            <person name="Heiman D."/>
            <person name="Young S."/>
            <person name="Gnerre S."/>
            <person name="Johnson J."/>
            <person name="Lander E.S."/>
            <person name="Lindblad-Toh K."/>
        </authorList>
    </citation>
    <scope>NUCLEOTIDE SEQUENCE [LARGE SCALE GENOMIC DNA]</scope>
    <source>
        <strain>Thorbecke</strain>
    </source>
</reference>
<reference key="2">
    <citation type="journal article" date="1971" name="J. Biol. Chem.">
        <title>Amino acid sequence and sequence variability of the amino-terminal regions of lysine-rich histones.</title>
        <authorList>
            <person name="Rall S.C."/>
            <person name="Cole R.D."/>
        </authorList>
    </citation>
    <scope>PROTEIN SEQUENCE OF 2-71</scope>
    <scope>ACETYLATION AT SER-2</scope>
    <scope>PHOSPHORYLATION AT SER-36</scope>
</reference>
<reference key="3">
    <citation type="journal article" date="1971" name="J. Biol. Chem.">
        <title>Variation in primary structure at a phosphorylation site in lysine-rich histones.</title>
        <authorList>
            <person name="Langan T.A."/>
            <person name="Rall S.C."/>
            <person name="Cole R.D."/>
        </authorList>
    </citation>
    <scope>PROTEIN SEQUENCE OF 3-72</scope>
</reference>
<protein>
    <recommendedName>
        <fullName>Histone H1.4</fullName>
    </recommendedName>
</protein>
<keyword id="KW-0007">Acetylation</keyword>
<keyword id="KW-0158">Chromosome</keyword>
<keyword id="KW-0164">Citrullination</keyword>
<keyword id="KW-0903">Direct protein sequencing</keyword>
<keyword id="KW-0238">DNA-binding</keyword>
<keyword id="KW-0379">Hydroxylation</keyword>
<keyword id="KW-0488">Methylation</keyword>
<keyword id="KW-0539">Nucleus</keyword>
<keyword id="KW-0597">Phosphoprotein</keyword>
<keyword id="KW-1185">Reference proteome</keyword>
<organism>
    <name type="scientific">Oryctolagus cuniculus</name>
    <name type="common">Rabbit</name>
    <dbReference type="NCBI Taxonomy" id="9986"/>
    <lineage>
        <taxon>Eukaryota</taxon>
        <taxon>Metazoa</taxon>
        <taxon>Chordata</taxon>
        <taxon>Craniata</taxon>
        <taxon>Vertebrata</taxon>
        <taxon>Euteleostomi</taxon>
        <taxon>Mammalia</taxon>
        <taxon>Eutheria</taxon>
        <taxon>Euarchontoglires</taxon>
        <taxon>Glires</taxon>
        <taxon>Lagomorpha</taxon>
        <taxon>Leporidae</taxon>
        <taxon>Oryctolagus</taxon>
    </lineage>
</organism>
<gene>
    <name evidence="2" type="primary">H1-4</name>
</gene>
<comment type="function">
    <text evidence="1">Histone H1 protein binds to linker DNA between nucleosomes forming the macromolecular structure known as the chromatin fiber. Histones H1 are necessary for the condensation of nucleosome chains into higher-order structured fibers. Also acts as a regulator of individual gene transcription through chromatin remodeling, nucleosome spacing and DNA methylation (By similarity).</text>
</comment>
<comment type="subcellular location">
    <subcellularLocation>
        <location>Nucleus</location>
    </subcellularLocation>
    <subcellularLocation>
        <location>Chromosome</location>
    </subcellularLocation>
    <text evidence="1">Mainly localizes in heterochromatin.</text>
</comment>
<comment type="domain">
    <text>The C-terminal domain is required for high-affinity binding to chromatin.</text>
</comment>
<comment type="PTM">
    <text evidence="5">H1 histones are progressively phosphorylated during the cell cycle, becoming maximally phosphorylated during late G2 phase and M phase, and being dephosphorylated sharply thereafter.</text>
</comment>
<comment type="PTM">
    <text evidence="2">Acetylated at Lys-26. Deacetylated at Lys-26 by SIRT1.</text>
</comment>
<comment type="PTM">
    <text evidence="4">Citrullination at Arg-54 (H1R54ci) by PADI4 takes place within the DNA-binding site of H1 and results in its displacement from chromatin and global chromatin decondensation, thereby promoting pluripotency and stem cell maintenance.</text>
</comment>
<comment type="similarity">
    <text evidence="7">Belongs to the histone H1/H5 family.</text>
</comment>
<name>H14_RABIT</name>